<evidence type="ECO:0000255" key="1">
    <source>
        <dbReference type="HAMAP-Rule" id="MF_01588"/>
    </source>
</evidence>
<comment type="function">
    <text evidence="1">DNA ligase that catalyzes the formation of phosphodiester linkages between 5'-phosphoryl and 3'-hydroxyl groups in double-stranded DNA using NAD as a coenzyme and as the energy source for the reaction. It is essential for DNA replication and repair of damaged DNA.</text>
</comment>
<comment type="catalytic activity">
    <reaction evidence="1">
        <text>NAD(+) + (deoxyribonucleotide)n-3'-hydroxyl + 5'-phospho-(deoxyribonucleotide)m = (deoxyribonucleotide)n+m + AMP + beta-nicotinamide D-nucleotide.</text>
        <dbReference type="EC" id="6.5.1.2"/>
    </reaction>
</comment>
<comment type="cofactor">
    <cofactor evidence="1">
        <name>Mg(2+)</name>
        <dbReference type="ChEBI" id="CHEBI:18420"/>
    </cofactor>
    <cofactor evidence="1">
        <name>Mn(2+)</name>
        <dbReference type="ChEBI" id="CHEBI:29035"/>
    </cofactor>
</comment>
<comment type="similarity">
    <text evidence="1">Belongs to the NAD-dependent DNA ligase family. LigA subfamily.</text>
</comment>
<name>DNLJ_STAAB</name>
<proteinExistence type="inferred from homology"/>
<feature type="chain" id="PRO_0000313446" description="DNA ligase">
    <location>
        <begin position="1"/>
        <end position="667"/>
    </location>
</feature>
<feature type="domain" description="BRCT" evidence="1">
    <location>
        <begin position="586"/>
        <end position="667"/>
    </location>
</feature>
<feature type="active site" description="N6-AMP-lysine intermediate" evidence="1">
    <location>
        <position position="112"/>
    </location>
</feature>
<feature type="binding site" evidence="1">
    <location>
        <begin position="32"/>
        <end position="36"/>
    </location>
    <ligand>
        <name>NAD(+)</name>
        <dbReference type="ChEBI" id="CHEBI:57540"/>
    </ligand>
</feature>
<feature type="binding site" evidence="1">
    <location>
        <begin position="81"/>
        <end position="82"/>
    </location>
    <ligand>
        <name>NAD(+)</name>
        <dbReference type="ChEBI" id="CHEBI:57540"/>
    </ligand>
</feature>
<feature type="binding site" evidence="1">
    <location>
        <position position="110"/>
    </location>
    <ligand>
        <name>NAD(+)</name>
        <dbReference type="ChEBI" id="CHEBI:57540"/>
    </ligand>
</feature>
<feature type="binding site" evidence="1">
    <location>
        <position position="133"/>
    </location>
    <ligand>
        <name>NAD(+)</name>
        <dbReference type="ChEBI" id="CHEBI:57540"/>
    </ligand>
</feature>
<feature type="binding site" evidence="1">
    <location>
        <position position="167"/>
    </location>
    <ligand>
        <name>NAD(+)</name>
        <dbReference type="ChEBI" id="CHEBI:57540"/>
    </ligand>
</feature>
<feature type="binding site" evidence="1">
    <location>
        <position position="283"/>
    </location>
    <ligand>
        <name>NAD(+)</name>
        <dbReference type="ChEBI" id="CHEBI:57540"/>
    </ligand>
</feature>
<feature type="binding site" evidence="1">
    <location>
        <position position="307"/>
    </location>
    <ligand>
        <name>NAD(+)</name>
        <dbReference type="ChEBI" id="CHEBI:57540"/>
    </ligand>
</feature>
<feature type="binding site" evidence="1">
    <location>
        <position position="401"/>
    </location>
    <ligand>
        <name>Zn(2+)</name>
        <dbReference type="ChEBI" id="CHEBI:29105"/>
    </ligand>
</feature>
<feature type="binding site" evidence="1">
    <location>
        <position position="404"/>
    </location>
    <ligand>
        <name>Zn(2+)</name>
        <dbReference type="ChEBI" id="CHEBI:29105"/>
    </ligand>
</feature>
<feature type="binding site" evidence="1">
    <location>
        <position position="419"/>
    </location>
    <ligand>
        <name>Zn(2+)</name>
        <dbReference type="ChEBI" id="CHEBI:29105"/>
    </ligand>
</feature>
<feature type="binding site" evidence="1">
    <location>
        <position position="424"/>
    </location>
    <ligand>
        <name>Zn(2+)</name>
        <dbReference type="ChEBI" id="CHEBI:29105"/>
    </ligand>
</feature>
<dbReference type="EC" id="6.5.1.2" evidence="1"/>
<dbReference type="EMBL" id="AJ938182">
    <property type="protein sequence ID" value="CAI81528.1"/>
    <property type="molecule type" value="Genomic_DNA"/>
</dbReference>
<dbReference type="RefSeq" id="WP_000774570.1">
    <property type="nucleotide sequence ID" value="NC_007622.1"/>
</dbReference>
<dbReference type="SMR" id="Q2YU70"/>
<dbReference type="KEGG" id="sab:SAB1839c"/>
<dbReference type="HOGENOM" id="CLU_007764_2_1_9"/>
<dbReference type="GO" id="GO:0005829">
    <property type="term" value="C:cytosol"/>
    <property type="evidence" value="ECO:0007669"/>
    <property type="project" value="TreeGrafter"/>
</dbReference>
<dbReference type="GO" id="GO:0003677">
    <property type="term" value="F:DNA binding"/>
    <property type="evidence" value="ECO:0007669"/>
    <property type="project" value="InterPro"/>
</dbReference>
<dbReference type="GO" id="GO:0003911">
    <property type="term" value="F:DNA ligase (NAD+) activity"/>
    <property type="evidence" value="ECO:0007669"/>
    <property type="project" value="UniProtKB-UniRule"/>
</dbReference>
<dbReference type="GO" id="GO:0046872">
    <property type="term" value="F:metal ion binding"/>
    <property type="evidence" value="ECO:0007669"/>
    <property type="project" value="UniProtKB-KW"/>
</dbReference>
<dbReference type="GO" id="GO:0006281">
    <property type="term" value="P:DNA repair"/>
    <property type="evidence" value="ECO:0007669"/>
    <property type="project" value="UniProtKB-KW"/>
</dbReference>
<dbReference type="GO" id="GO:0006260">
    <property type="term" value="P:DNA replication"/>
    <property type="evidence" value="ECO:0007669"/>
    <property type="project" value="UniProtKB-KW"/>
</dbReference>
<dbReference type="CDD" id="cd17748">
    <property type="entry name" value="BRCT_DNA_ligase_like"/>
    <property type="match status" value="1"/>
</dbReference>
<dbReference type="CDD" id="cd00114">
    <property type="entry name" value="LIGANc"/>
    <property type="match status" value="1"/>
</dbReference>
<dbReference type="FunFam" id="1.10.150.20:FF:000006">
    <property type="entry name" value="DNA ligase"/>
    <property type="match status" value="1"/>
</dbReference>
<dbReference type="FunFam" id="1.10.150.20:FF:000007">
    <property type="entry name" value="DNA ligase"/>
    <property type="match status" value="1"/>
</dbReference>
<dbReference type="FunFam" id="1.10.287.610:FF:000005">
    <property type="entry name" value="DNA ligase"/>
    <property type="match status" value="1"/>
</dbReference>
<dbReference type="FunFam" id="2.40.50.140:FF:000012">
    <property type="entry name" value="DNA ligase"/>
    <property type="match status" value="1"/>
</dbReference>
<dbReference type="FunFam" id="3.30.470.30:FF:000001">
    <property type="entry name" value="DNA ligase"/>
    <property type="match status" value="1"/>
</dbReference>
<dbReference type="FunFam" id="3.40.50.10190:FF:000045">
    <property type="entry name" value="DNA ligase"/>
    <property type="match status" value="1"/>
</dbReference>
<dbReference type="FunFam" id="6.20.10.30:FF:000002">
    <property type="entry name" value="DNA ligase"/>
    <property type="match status" value="1"/>
</dbReference>
<dbReference type="Gene3D" id="6.20.10.30">
    <property type="match status" value="1"/>
</dbReference>
<dbReference type="Gene3D" id="1.10.150.20">
    <property type="entry name" value="5' to 3' exonuclease, C-terminal subdomain"/>
    <property type="match status" value="2"/>
</dbReference>
<dbReference type="Gene3D" id="3.40.50.10190">
    <property type="entry name" value="BRCT domain"/>
    <property type="match status" value="1"/>
</dbReference>
<dbReference type="Gene3D" id="3.30.470.30">
    <property type="entry name" value="DNA ligase/mRNA capping enzyme"/>
    <property type="match status" value="1"/>
</dbReference>
<dbReference type="Gene3D" id="1.10.287.610">
    <property type="entry name" value="Helix hairpin bin"/>
    <property type="match status" value="1"/>
</dbReference>
<dbReference type="Gene3D" id="2.40.50.140">
    <property type="entry name" value="Nucleic acid-binding proteins"/>
    <property type="match status" value="1"/>
</dbReference>
<dbReference type="HAMAP" id="MF_01588">
    <property type="entry name" value="DNA_ligase_A"/>
    <property type="match status" value="1"/>
</dbReference>
<dbReference type="InterPro" id="IPR001357">
    <property type="entry name" value="BRCT_dom"/>
</dbReference>
<dbReference type="InterPro" id="IPR036420">
    <property type="entry name" value="BRCT_dom_sf"/>
</dbReference>
<dbReference type="InterPro" id="IPR041663">
    <property type="entry name" value="DisA/LigA_HHH"/>
</dbReference>
<dbReference type="InterPro" id="IPR001679">
    <property type="entry name" value="DNA_ligase"/>
</dbReference>
<dbReference type="InterPro" id="IPR018239">
    <property type="entry name" value="DNA_ligase_AS"/>
</dbReference>
<dbReference type="InterPro" id="IPR033136">
    <property type="entry name" value="DNA_ligase_CS"/>
</dbReference>
<dbReference type="InterPro" id="IPR013839">
    <property type="entry name" value="DNAligase_adenylation"/>
</dbReference>
<dbReference type="InterPro" id="IPR013840">
    <property type="entry name" value="DNAligase_N"/>
</dbReference>
<dbReference type="InterPro" id="IPR003583">
    <property type="entry name" value="Hlx-hairpin-Hlx_DNA-bd_motif"/>
</dbReference>
<dbReference type="InterPro" id="IPR012340">
    <property type="entry name" value="NA-bd_OB-fold"/>
</dbReference>
<dbReference type="InterPro" id="IPR004150">
    <property type="entry name" value="NAD_DNA_ligase_OB"/>
</dbReference>
<dbReference type="InterPro" id="IPR010994">
    <property type="entry name" value="RuvA_2-like"/>
</dbReference>
<dbReference type="InterPro" id="IPR004149">
    <property type="entry name" value="Znf_DNAligase_C4"/>
</dbReference>
<dbReference type="NCBIfam" id="TIGR00575">
    <property type="entry name" value="dnlj"/>
    <property type="match status" value="1"/>
</dbReference>
<dbReference type="NCBIfam" id="NF005932">
    <property type="entry name" value="PRK07956.1"/>
    <property type="match status" value="1"/>
</dbReference>
<dbReference type="PANTHER" id="PTHR23389">
    <property type="entry name" value="CHROMOSOME TRANSMISSION FIDELITY FACTOR 18"/>
    <property type="match status" value="1"/>
</dbReference>
<dbReference type="PANTHER" id="PTHR23389:SF9">
    <property type="entry name" value="DNA LIGASE"/>
    <property type="match status" value="1"/>
</dbReference>
<dbReference type="Pfam" id="PF00533">
    <property type="entry name" value="BRCT"/>
    <property type="match status" value="1"/>
</dbReference>
<dbReference type="Pfam" id="PF01653">
    <property type="entry name" value="DNA_ligase_aden"/>
    <property type="match status" value="1"/>
</dbReference>
<dbReference type="Pfam" id="PF03120">
    <property type="entry name" value="DNA_ligase_OB"/>
    <property type="match status" value="1"/>
</dbReference>
<dbReference type="Pfam" id="PF03119">
    <property type="entry name" value="DNA_ligase_ZBD"/>
    <property type="match status" value="1"/>
</dbReference>
<dbReference type="Pfam" id="PF12826">
    <property type="entry name" value="HHH_2"/>
    <property type="match status" value="1"/>
</dbReference>
<dbReference type="PIRSF" id="PIRSF001604">
    <property type="entry name" value="LigA"/>
    <property type="match status" value="1"/>
</dbReference>
<dbReference type="SMART" id="SM00292">
    <property type="entry name" value="BRCT"/>
    <property type="match status" value="1"/>
</dbReference>
<dbReference type="SMART" id="SM00278">
    <property type="entry name" value="HhH1"/>
    <property type="match status" value="3"/>
</dbReference>
<dbReference type="SMART" id="SM00532">
    <property type="entry name" value="LIGANc"/>
    <property type="match status" value="1"/>
</dbReference>
<dbReference type="SUPFAM" id="SSF52113">
    <property type="entry name" value="BRCT domain"/>
    <property type="match status" value="1"/>
</dbReference>
<dbReference type="SUPFAM" id="SSF56091">
    <property type="entry name" value="DNA ligase/mRNA capping enzyme, catalytic domain"/>
    <property type="match status" value="1"/>
</dbReference>
<dbReference type="SUPFAM" id="SSF50249">
    <property type="entry name" value="Nucleic acid-binding proteins"/>
    <property type="match status" value="1"/>
</dbReference>
<dbReference type="SUPFAM" id="SSF47781">
    <property type="entry name" value="RuvA domain 2-like"/>
    <property type="match status" value="1"/>
</dbReference>
<dbReference type="PROSITE" id="PS50172">
    <property type="entry name" value="BRCT"/>
    <property type="match status" value="1"/>
</dbReference>
<dbReference type="PROSITE" id="PS01055">
    <property type="entry name" value="DNA_LIGASE_N1"/>
    <property type="match status" value="1"/>
</dbReference>
<dbReference type="PROSITE" id="PS01056">
    <property type="entry name" value="DNA_LIGASE_N2"/>
    <property type="match status" value="1"/>
</dbReference>
<sequence length="667" mass="75023">MADLSSRVNELHDLLNQYSYEYYVEDNPSVPDSEYDKLLHELIKIEEEHPEYKTVDSPTVRVGGEAQASFNKVNHDTPMLSLGNAFNEDDLRKFDQRIREQIGNVEYMCELKIDGLAVSLKYVDGYFVQGLTRGDGTTGEDITENLKTIHAIPLKMKEPLNVEVRGEAYMPRRSFLRLNEEKEKNDEQLFANPRNAAAGSLRQLDSKLTAKRKLSVFIYSVNDFTDFNARSQSEALDELDKLGFTTNKNRARVNNIDGVLEYIEKWTSQRESLPYDIDGIVIKVNDLDQQDEMGFTQKSPRWAIAYKFPAEEVVTKLLDIELSIGRTGVVTPTAILEPVKVAGTTVSRASLHNEDLIHDRDIRIGDSVVVKKAGDIIPEVVRSIPERRPEGAVTYHMPTHCPSCGHELVRIEGEVALRCINPKCQAQLVEGLIHFVSRQAMNIDGLGTKIIQQLYQSELIKDVADIFYLTEEDLLPLDRMGQKKVDNLLAAIQQAKDNSLENLLFGLGIRHLGVKASQVLAEKYETIDRLLTVTEAELVEIHDIGDKVAQSVVTYLENEDIRALIQKLKDKHVNMIYKGIKTSDIEGHPEFSGKTIVLTGKLHQMTRNEASKWLASQGAKVTSSVTKNTDVVIAGEDAGSKLTKAQSLGIEIWTEQQFVDKQNELNS</sequence>
<accession>Q2YU70</accession>
<protein>
    <recommendedName>
        <fullName evidence="1">DNA ligase</fullName>
        <ecNumber evidence="1">6.5.1.2</ecNumber>
    </recommendedName>
    <alternativeName>
        <fullName evidence="1">Polydeoxyribonucleotide synthase [NAD(+)]</fullName>
    </alternativeName>
</protein>
<reference key="1">
    <citation type="journal article" date="2007" name="PLoS ONE">
        <title>Molecular correlates of host specialization in Staphylococcus aureus.</title>
        <authorList>
            <person name="Herron-Olson L."/>
            <person name="Fitzgerald J.R."/>
            <person name="Musser J.M."/>
            <person name="Kapur V."/>
        </authorList>
    </citation>
    <scope>NUCLEOTIDE SEQUENCE [LARGE SCALE GENOMIC DNA]</scope>
    <source>
        <strain>bovine RF122 / ET3-1</strain>
    </source>
</reference>
<keyword id="KW-0227">DNA damage</keyword>
<keyword id="KW-0234">DNA repair</keyword>
<keyword id="KW-0235">DNA replication</keyword>
<keyword id="KW-0436">Ligase</keyword>
<keyword id="KW-0460">Magnesium</keyword>
<keyword id="KW-0464">Manganese</keyword>
<keyword id="KW-0479">Metal-binding</keyword>
<keyword id="KW-0520">NAD</keyword>
<keyword id="KW-0862">Zinc</keyword>
<gene>
    <name evidence="1" type="primary">ligA</name>
    <name type="ordered locus">SAB1839c</name>
</gene>
<organism>
    <name type="scientific">Staphylococcus aureus (strain bovine RF122 / ET3-1)</name>
    <dbReference type="NCBI Taxonomy" id="273036"/>
    <lineage>
        <taxon>Bacteria</taxon>
        <taxon>Bacillati</taxon>
        <taxon>Bacillota</taxon>
        <taxon>Bacilli</taxon>
        <taxon>Bacillales</taxon>
        <taxon>Staphylococcaceae</taxon>
        <taxon>Staphylococcus</taxon>
    </lineage>
</organism>